<comment type="function">
    <text>Controls the classical pathway of complement activation. It binds as a cofactor to C3b/C4b inactivator (C3bINA), which then hydrolyzes the complement fragment C4b. It also accelerates the degradation of the C4bC2a complex (C3 convertase) by dissociating the complement fragment C2a. It also interacts with serum amyloid P component.</text>
</comment>
<comment type="subunit">
    <text evidence="1">Disulfide-linked complex of alpha and beta chains.</text>
</comment>
<comment type="subcellular location">
    <subcellularLocation>
        <location>Secreted</location>
    </subcellularLocation>
</comment>
<name>C4BPB_BOVIN</name>
<proteinExistence type="evidence at transcript level"/>
<protein>
    <recommendedName>
        <fullName>C4b-binding protein beta chain</fullName>
    </recommendedName>
</protein>
<keyword id="KW-0180">Complement pathway</keyword>
<keyword id="KW-1015">Disulfide bond</keyword>
<keyword id="KW-0325">Glycoprotein</keyword>
<keyword id="KW-0391">Immunity</keyword>
<keyword id="KW-0399">Innate immunity</keyword>
<keyword id="KW-1185">Reference proteome</keyword>
<keyword id="KW-0677">Repeat</keyword>
<keyword id="KW-0964">Secreted</keyword>
<keyword id="KW-0732">Signal</keyword>
<keyword id="KW-0768">Sushi</keyword>
<organism>
    <name type="scientific">Bos taurus</name>
    <name type="common">Bovine</name>
    <dbReference type="NCBI Taxonomy" id="9913"/>
    <lineage>
        <taxon>Eukaryota</taxon>
        <taxon>Metazoa</taxon>
        <taxon>Chordata</taxon>
        <taxon>Craniata</taxon>
        <taxon>Vertebrata</taxon>
        <taxon>Euteleostomi</taxon>
        <taxon>Mammalia</taxon>
        <taxon>Eutheria</taxon>
        <taxon>Laurasiatheria</taxon>
        <taxon>Artiodactyla</taxon>
        <taxon>Ruminantia</taxon>
        <taxon>Pecora</taxon>
        <taxon>Bovidae</taxon>
        <taxon>Bovinae</taxon>
        <taxon>Bos</taxon>
    </lineage>
</organism>
<sequence length="198" mass="22829">MFFWLMCYLVDVWLISASDVGHCPDPLLVTDEFSSLEPVNVNDTFMFKCNEHCIFKGSNWSQCRENHTRVTHSPVSKSRDCGPPETPTHGYFEGRDFKSGSTITYYCEARYRLVGTQHQQCIDGEWTSAPPICELIQEAPKPAELELEKAFLAFQESKELCKAIKKFTQRLKKSDLTMEKVKYSLERKKAKLKAKMLL</sequence>
<reference key="1">
    <citation type="journal article" date="1994" name="J. Immunol.">
        <title>Bovine C4b binding protein. Molecular cloning of the alpha- and beta-chains provides structural background for lack of complex formation with protein S.</title>
        <authorList>
            <person name="Hillarp A."/>
            <person name="Thern A."/>
            <person name="Dahlbaech B."/>
        </authorList>
    </citation>
    <scope>NUCLEOTIDE SEQUENCE [MRNA]</scope>
    <source>
        <tissue>Liver</tissue>
    </source>
</reference>
<reference key="2">
    <citation type="submission" date="2006-01" db="EMBL/GenBank/DDBJ databases">
        <authorList>
            <consortium name="NIH - Mammalian Gene Collection (MGC) project"/>
        </authorList>
    </citation>
    <scope>NUCLEOTIDE SEQUENCE [LARGE SCALE MRNA]</scope>
    <source>
        <strain>Hereford</strain>
        <tissue>Testis</tissue>
    </source>
</reference>
<feature type="signal peptide" evidence="2">
    <location>
        <begin position="1"/>
        <end position="17"/>
    </location>
</feature>
<feature type="chain" id="PRO_0000005891" description="C4b-binding protein beta chain">
    <location>
        <begin position="18"/>
        <end position="198"/>
    </location>
</feature>
<feature type="domain" description="Sushi 1; atypical; lacks a Cys" evidence="3">
    <location>
        <begin position="22"/>
        <end position="77"/>
    </location>
</feature>
<feature type="domain" description="Sushi 2" evidence="3">
    <location>
        <begin position="79"/>
        <end position="135"/>
    </location>
</feature>
<feature type="glycosylation site" description="N-linked (GlcNAc...) asparagine" evidence="2">
    <location>
        <position position="42"/>
    </location>
</feature>
<feature type="glycosylation site" description="N-linked (GlcNAc...) asparagine" evidence="2">
    <location>
        <position position="59"/>
    </location>
</feature>
<feature type="glycosylation site" description="N-linked (GlcNAc...) asparagine" evidence="2">
    <location>
        <position position="66"/>
    </location>
</feature>
<feature type="disulfide bond" evidence="3">
    <location>
        <begin position="81"/>
        <end position="121"/>
    </location>
</feature>
<feature type="disulfide bond" evidence="3">
    <location>
        <begin position="107"/>
        <end position="133"/>
    </location>
</feature>
<feature type="disulfide bond" description="Interchain (with alpha chain)" evidence="3">
    <location>
        <position position="161"/>
    </location>
</feature>
<feature type="sequence conflict" description="In Ref. 2; AAI12544." evidence="4" ref="2">
    <original>E</original>
    <variation>Q</variation>
    <location>
        <position position="108"/>
    </location>
</feature>
<feature type="sequence conflict" description="In Ref. 2; AAI12544." evidence="4" ref="2">
    <original>M</original>
    <variation>T</variation>
    <location>
        <position position="196"/>
    </location>
</feature>
<dbReference type="EMBL" id="Z31694">
    <property type="protein sequence ID" value="CAA83499.1"/>
    <property type="molecule type" value="mRNA"/>
</dbReference>
<dbReference type="EMBL" id="BC112543">
    <property type="protein sequence ID" value="AAI12544.1"/>
    <property type="molecule type" value="mRNA"/>
</dbReference>
<dbReference type="PIR" id="I46002">
    <property type="entry name" value="I46002"/>
</dbReference>
<dbReference type="RefSeq" id="NP_776678.2">
    <property type="nucleotide sequence ID" value="NM_174253.3"/>
</dbReference>
<dbReference type="SMR" id="Q28066"/>
<dbReference type="FunCoup" id="Q28066">
    <property type="interactions" value="100"/>
</dbReference>
<dbReference type="STRING" id="9913.ENSBTAP00000066677"/>
<dbReference type="GlyCosmos" id="Q28066">
    <property type="glycosylation" value="3 sites, No reported glycans"/>
</dbReference>
<dbReference type="GlyGen" id="Q28066">
    <property type="glycosylation" value="3 sites"/>
</dbReference>
<dbReference type="PaxDb" id="9913-ENSBTAP00000023558"/>
<dbReference type="GeneID" id="281652"/>
<dbReference type="KEGG" id="bta:281652"/>
<dbReference type="CTD" id="725"/>
<dbReference type="eggNOG" id="KOG4297">
    <property type="taxonomic scope" value="Eukaryota"/>
</dbReference>
<dbReference type="InParanoid" id="Q28066"/>
<dbReference type="OrthoDB" id="6480633at2759"/>
<dbReference type="Proteomes" id="UP000009136">
    <property type="component" value="Unplaced"/>
</dbReference>
<dbReference type="GO" id="GO:0005576">
    <property type="term" value="C:extracellular region"/>
    <property type="evidence" value="ECO:0007669"/>
    <property type="project" value="UniProtKB-SubCell"/>
</dbReference>
<dbReference type="GO" id="GO:0006958">
    <property type="term" value="P:complement activation, classical pathway"/>
    <property type="evidence" value="ECO:0007669"/>
    <property type="project" value="UniProtKB-KW"/>
</dbReference>
<dbReference type="GO" id="GO:0045087">
    <property type="term" value="P:innate immune response"/>
    <property type="evidence" value="ECO:0007669"/>
    <property type="project" value="UniProtKB-KW"/>
</dbReference>
<dbReference type="CDD" id="cd00033">
    <property type="entry name" value="CCP"/>
    <property type="match status" value="1"/>
</dbReference>
<dbReference type="Gene3D" id="2.10.70.10">
    <property type="entry name" value="Complement Module, domain 1"/>
    <property type="match status" value="1"/>
</dbReference>
<dbReference type="InterPro" id="IPR035976">
    <property type="entry name" value="Sushi/SCR/CCP_sf"/>
</dbReference>
<dbReference type="InterPro" id="IPR000436">
    <property type="entry name" value="Sushi_SCR_CCP_dom"/>
</dbReference>
<dbReference type="PANTHER" id="PTHR46393:SF7">
    <property type="entry name" value="COMPLEMENT C2"/>
    <property type="match status" value="1"/>
</dbReference>
<dbReference type="PANTHER" id="PTHR46393">
    <property type="entry name" value="SUSHI DOMAIN-CONTAINING PROTEIN"/>
    <property type="match status" value="1"/>
</dbReference>
<dbReference type="Pfam" id="PF00084">
    <property type="entry name" value="Sushi"/>
    <property type="match status" value="1"/>
</dbReference>
<dbReference type="SMART" id="SM00032">
    <property type="entry name" value="CCP"/>
    <property type="match status" value="2"/>
</dbReference>
<dbReference type="SUPFAM" id="SSF57535">
    <property type="entry name" value="Complement control module/SCR domain"/>
    <property type="match status" value="2"/>
</dbReference>
<dbReference type="PROSITE" id="PS50923">
    <property type="entry name" value="SUSHI"/>
    <property type="match status" value="1"/>
</dbReference>
<gene>
    <name type="primary">C4BPB</name>
</gene>
<evidence type="ECO:0000250" key="1"/>
<evidence type="ECO:0000255" key="2"/>
<evidence type="ECO:0000255" key="3">
    <source>
        <dbReference type="PROSITE-ProRule" id="PRU00302"/>
    </source>
</evidence>
<evidence type="ECO:0000305" key="4"/>
<accession>Q28066</accession>
<accession>Q2KIR2</accession>